<protein>
    <recommendedName>
        <fullName evidence="1">Phosphoribosylaminoimidazole-succinocarboxamide synthase</fullName>
        <ecNumber evidence="1">6.3.2.6</ecNumber>
    </recommendedName>
    <alternativeName>
        <fullName evidence="1">SAICAR synthetase</fullName>
    </alternativeName>
</protein>
<keyword id="KW-0067">ATP-binding</keyword>
<keyword id="KW-0436">Ligase</keyword>
<keyword id="KW-0547">Nucleotide-binding</keyword>
<keyword id="KW-0658">Purine biosynthesis</keyword>
<accession>Q8G178</accession>
<accession>G0K8Z0</accession>
<dbReference type="EC" id="6.3.2.6" evidence="1"/>
<dbReference type="EMBL" id="AE014291">
    <property type="protein sequence ID" value="AAN29771.1"/>
    <property type="molecule type" value="Genomic_DNA"/>
</dbReference>
<dbReference type="EMBL" id="CP002997">
    <property type="protein sequence ID" value="AEM18188.1"/>
    <property type="molecule type" value="Genomic_DNA"/>
</dbReference>
<dbReference type="RefSeq" id="WP_004688254.1">
    <property type="nucleotide sequence ID" value="NZ_KN046804.1"/>
</dbReference>
<dbReference type="SMR" id="Q8G178"/>
<dbReference type="GeneID" id="97533857"/>
<dbReference type="KEGG" id="bms:BR0842"/>
<dbReference type="KEGG" id="bsi:BS1330_I0838"/>
<dbReference type="PATRIC" id="fig|204722.21.peg.1668"/>
<dbReference type="HOGENOM" id="CLU_061495_2_0_5"/>
<dbReference type="PhylomeDB" id="Q8G178"/>
<dbReference type="UniPathway" id="UPA00074">
    <property type="reaction ID" value="UER00131"/>
</dbReference>
<dbReference type="Proteomes" id="UP000007104">
    <property type="component" value="Chromosome I"/>
</dbReference>
<dbReference type="GO" id="GO:0005829">
    <property type="term" value="C:cytosol"/>
    <property type="evidence" value="ECO:0007669"/>
    <property type="project" value="TreeGrafter"/>
</dbReference>
<dbReference type="GO" id="GO:0005524">
    <property type="term" value="F:ATP binding"/>
    <property type="evidence" value="ECO:0007669"/>
    <property type="project" value="UniProtKB-KW"/>
</dbReference>
<dbReference type="GO" id="GO:0004639">
    <property type="term" value="F:phosphoribosylaminoimidazolesuccinocarboxamide synthase activity"/>
    <property type="evidence" value="ECO:0007669"/>
    <property type="project" value="UniProtKB-UniRule"/>
</dbReference>
<dbReference type="GO" id="GO:0006189">
    <property type="term" value="P:'de novo' IMP biosynthetic process"/>
    <property type="evidence" value="ECO:0007669"/>
    <property type="project" value="UniProtKB-UniRule"/>
</dbReference>
<dbReference type="GO" id="GO:0009236">
    <property type="term" value="P:cobalamin biosynthetic process"/>
    <property type="evidence" value="ECO:0007669"/>
    <property type="project" value="InterPro"/>
</dbReference>
<dbReference type="CDD" id="cd01415">
    <property type="entry name" value="SAICAR_synt_PurC"/>
    <property type="match status" value="1"/>
</dbReference>
<dbReference type="FunFam" id="3.30.470.20:FF:000006">
    <property type="entry name" value="Phosphoribosylaminoimidazole-succinocarboxamide synthase"/>
    <property type="match status" value="1"/>
</dbReference>
<dbReference type="Gene3D" id="3.30.470.20">
    <property type="entry name" value="ATP-grasp fold, B domain"/>
    <property type="match status" value="1"/>
</dbReference>
<dbReference type="Gene3D" id="3.30.200.20">
    <property type="entry name" value="Phosphorylase Kinase, domain 1"/>
    <property type="match status" value="1"/>
</dbReference>
<dbReference type="HAMAP" id="MF_00137">
    <property type="entry name" value="SAICAR_synth"/>
    <property type="match status" value="1"/>
</dbReference>
<dbReference type="InterPro" id="IPR028923">
    <property type="entry name" value="SAICAR_synt/ADE2_N"/>
</dbReference>
<dbReference type="InterPro" id="IPR033934">
    <property type="entry name" value="SAICAR_synt_PurC"/>
</dbReference>
<dbReference type="InterPro" id="IPR001636">
    <property type="entry name" value="SAICAR_synth"/>
</dbReference>
<dbReference type="InterPro" id="IPR050089">
    <property type="entry name" value="SAICAR_synthetase"/>
</dbReference>
<dbReference type="InterPro" id="IPR018236">
    <property type="entry name" value="SAICAR_synthetase_CS"/>
</dbReference>
<dbReference type="NCBIfam" id="TIGR00081">
    <property type="entry name" value="purC"/>
    <property type="match status" value="1"/>
</dbReference>
<dbReference type="PANTHER" id="PTHR43599">
    <property type="entry name" value="MULTIFUNCTIONAL PROTEIN ADE2"/>
    <property type="match status" value="1"/>
</dbReference>
<dbReference type="PANTHER" id="PTHR43599:SF3">
    <property type="entry name" value="SI:DKEY-6E2.2"/>
    <property type="match status" value="1"/>
</dbReference>
<dbReference type="Pfam" id="PF01259">
    <property type="entry name" value="SAICAR_synt"/>
    <property type="match status" value="1"/>
</dbReference>
<dbReference type="SUPFAM" id="SSF56104">
    <property type="entry name" value="SAICAR synthase-like"/>
    <property type="match status" value="1"/>
</dbReference>
<dbReference type="PROSITE" id="PS01057">
    <property type="entry name" value="SAICAR_SYNTHETASE_1"/>
    <property type="match status" value="1"/>
</dbReference>
<reference key="1">
    <citation type="journal article" date="2002" name="Proc. Natl. Acad. Sci. U.S.A.">
        <title>The Brucella suis genome reveals fundamental similarities between animal and plant pathogens and symbionts.</title>
        <authorList>
            <person name="Paulsen I.T."/>
            <person name="Seshadri R."/>
            <person name="Nelson K.E."/>
            <person name="Eisen J.A."/>
            <person name="Heidelberg J.F."/>
            <person name="Read T.D."/>
            <person name="Dodson R.J."/>
            <person name="Umayam L.A."/>
            <person name="Brinkac L.M."/>
            <person name="Beanan M.J."/>
            <person name="Daugherty S.C."/>
            <person name="DeBoy R.T."/>
            <person name="Durkin A.S."/>
            <person name="Kolonay J.F."/>
            <person name="Madupu R."/>
            <person name="Nelson W.C."/>
            <person name="Ayodeji B."/>
            <person name="Kraul M."/>
            <person name="Shetty J."/>
            <person name="Malek J.A."/>
            <person name="Van Aken S.E."/>
            <person name="Riedmuller S."/>
            <person name="Tettelin H."/>
            <person name="Gill S.R."/>
            <person name="White O."/>
            <person name="Salzberg S.L."/>
            <person name="Hoover D.L."/>
            <person name="Lindler L.E."/>
            <person name="Halling S.M."/>
            <person name="Boyle S.M."/>
            <person name="Fraser C.M."/>
        </authorList>
    </citation>
    <scope>NUCLEOTIDE SEQUENCE [LARGE SCALE GENOMIC DNA]</scope>
    <source>
        <strain>1330</strain>
    </source>
</reference>
<reference key="2">
    <citation type="journal article" date="2011" name="J. Bacteriol.">
        <title>Revised genome sequence of Brucella suis 1330.</title>
        <authorList>
            <person name="Tae H."/>
            <person name="Shallom S."/>
            <person name="Settlage R."/>
            <person name="Preston D."/>
            <person name="Adams L.G."/>
            <person name="Garner H.R."/>
        </authorList>
    </citation>
    <scope>NUCLEOTIDE SEQUENCE [LARGE SCALE GENOMIC DNA]</scope>
    <source>
        <strain>1330</strain>
    </source>
</reference>
<evidence type="ECO:0000255" key="1">
    <source>
        <dbReference type="HAMAP-Rule" id="MF_00137"/>
    </source>
</evidence>
<comment type="catalytic activity">
    <reaction evidence="1">
        <text>5-amino-1-(5-phospho-D-ribosyl)imidazole-4-carboxylate + L-aspartate + ATP = (2S)-2-[5-amino-1-(5-phospho-beta-D-ribosyl)imidazole-4-carboxamido]succinate + ADP + phosphate + 2 H(+)</text>
        <dbReference type="Rhea" id="RHEA:22628"/>
        <dbReference type="ChEBI" id="CHEBI:15378"/>
        <dbReference type="ChEBI" id="CHEBI:29991"/>
        <dbReference type="ChEBI" id="CHEBI:30616"/>
        <dbReference type="ChEBI" id="CHEBI:43474"/>
        <dbReference type="ChEBI" id="CHEBI:58443"/>
        <dbReference type="ChEBI" id="CHEBI:77657"/>
        <dbReference type="ChEBI" id="CHEBI:456216"/>
        <dbReference type="EC" id="6.3.2.6"/>
    </reaction>
</comment>
<comment type="pathway">
    <text evidence="1">Purine metabolism; IMP biosynthesis via de novo pathway; 5-amino-1-(5-phospho-D-ribosyl)imidazole-4-carboxamide from 5-amino-1-(5-phospho-D-ribosyl)imidazole-4-carboxylate: step 1/2.</text>
</comment>
<comment type="similarity">
    <text evidence="1">Belongs to the SAICAR synthetase family.</text>
</comment>
<proteinExistence type="inferred from homology"/>
<gene>
    <name evidence="1" type="primary">purC</name>
    <name type="ordered locus">BR0842</name>
    <name type="ordered locus">BS1330_I0838</name>
</gene>
<name>PUR7_BRUSU</name>
<feature type="chain" id="PRO_0000100810" description="Phosphoribosylaminoimidazole-succinocarboxamide synthase">
    <location>
        <begin position="1"/>
        <end position="254"/>
    </location>
</feature>
<sequence>MNRRRRIYEGKAKILYEGPEPGTLVQFFKDDATAFNAKKHEVIDGKGVLNNRISEHIFTQLNRIGIPTHFIRRLNMREQLIKEVEIIPLEVVVRNVAAGSLAKRLGLEEGTILPRSIIEFYYKADALDDPMVTEEHITAFGWASPQEIDDIMALAIRVNDFLTGLFLGIGIQLVDFKMECGRLWEGDMMRIVVADEISPDSARLWDITTNDKLDKDRFRRDMGGLVEAYQEVARRLGIMNENDTPRPSGPTLVK</sequence>
<organism>
    <name type="scientific">Brucella suis biovar 1 (strain 1330)</name>
    <dbReference type="NCBI Taxonomy" id="204722"/>
    <lineage>
        <taxon>Bacteria</taxon>
        <taxon>Pseudomonadati</taxon>
        <taxon>Pseudomonadota</taxon>
        <taxon>Alphaproteobacteria</taxon>
        <taxon>Hyphomicrobiales</taxon>
        <taxon>Brucellaceae</taxon>
        <taxon>Brucella/Ochrobactrum group</taxon>
        <taxon>Brucella</taxon>
    </lineage>
</organism>